<proteinExistence type="evidence at protein level"/>
<accession>P00946</accession>
<name>MANA_ECOLI</name>
<gene>
    <name type="primary">manA</name>
    <name type="synonym">pmi</name>
    <name type="ordered locus">b1613</name>
    <name type="ordered locus">JW1605</name>
</gene>
<sequence length="391" mass="42850">MQKLINSVQNYAWGSKTALTELYGMENPSSQPMAELWMGAHPKSSSRVQNAAGDIVSLRDVIESDKSTLLGEAVAKRFGELPFLFKVLCAAQPLSIQVHPNKHNSEIGFAKENAAGIPMDAAERNYKDPNHKPELVFALTPFLAMNAFREFSEIVSLLQPVAGAHPAIAHFLQQPDAERLSELFASLLNMQGEEKSRALAILKSALDSQQGEPWQTIRLISEFYPEDSGLFSPLLLNVVKLNPGEAMFLFAETPHAYLQGVALEVMANSDNVLRAGLTPKYIDIPELVANVKFEAKPANQLLTQPVKQGAELDFPIPVDDFAFSLHDLSDKETTISQQSAAILFCVEGDATLWKGSQQLQLKPGESAFIAANESPVTVKGHGRLARVYNKL</sequence>
<protein>
    <recommendedName>
        <fullName>Mannose-6-phosphate isomerase</fullName>
        <ecNumber>5.3.1.8</ecNumber>
    </recommendedName>
    <alternativeName>
        <fullName>Phosphohexomutase</fullName>
    </alternativeName>
    <alternativeName>
        <fullName>Phosphomannose isomerase</fullName>
        <shortName>PMI</shortName>
    </alternativeName>
</protein>
<feature type="chain" id="PRO_0000194230" description="Mannose-6-phosphate isomerase">
    <location>
        <begin position="1"/>
        <end position="391"/>
    </location>
</feature>
<feature type="active site" evidence="1">
    <location>
        <position position="274"/>
    </location>
</feature>
<feature type="binding site" evidence="1">
    <location>
        <position position="97"/>
    </location>
    <ligand>
        <name>Zn(2+)</name>
        <dbReference type="ChEBI" id="CHEBI:29105"/>
    </ligand>
</feature>
<feature type="binding site" evidence="1">
    <location>
        <position position="99"/>
    </location>
    <ligand>
        <name>Zn(2+)</name>
        <dbReference type="ChEBI" id="CHEBI:29105"/>
    </ligand>
</feature>
<feature type="binding site" evidence="1">
    <location>
        <position position="134"/>
    </location>
    <ligand>
        <name>Zn(2+)</name>
        <dbReference type="ChEBI" id="CHEBI:29105"/>
    </ligand>
</feature>
<feature type="binding site" evidence="1">
    <location>
        <position position="255"/>
    </location>
    <ligand>
        <name>Zn(2+)</name>
        <dbReference type="ChEBI" id="CHEBI:29105"/>
    </ligand>
</feature>
<feature type="modified residue" description="N6-acetyllysine" evidence="2">
    <location>
        <position position="280"/>
    </location>
</feature>
<dbReference type="EC" id="5.3.1.8"/>
<dbReference type="EMBL" id="M15380">
    <property type="protein sequence ID" value="AAA24109.1"/>
    <property type="molecule type" value="Genomic_DNA"/>
</dbReference>
<dbReference type="EMBL" id="U00096">
    <property type="protein sequence ID" value="AAC74685.1"/>
    <property type="molecule type" value="Genomic_DNA"/>
</dbReference>
<dbReference type="EMBL" id="AP009048">
    <property type="protein sequence ID" value="BAA15361.1"/>
    <property type="molecule type" value="Genomic_DNA"/>
</dbReference>
<dbReference type="EMBL" id="U35067">
    <property type="protein sequence ID" value="AAA79050.1"/>
    <property type="molecule type" value="Genomic_DNA"/>
</dbReference>
<dbReference type="PIR" id="A01172">
    <property type="entry name" value="ISECMP"/>
</dbReference>
<dbReference type="RefSeq" id="NP_416130.3">
    <property type="nucleotide sequence ID" value="NC_000913.3"/>
</dbReference>
<dbReference type="RefSeq" id="WP_001170664.1">
    <property type="nucleotide sequence ID" value="NZ_SSZK01000001.1"/>
</dbReference>
<dbReference type="SMR" id="P00946"/>
<dbReference type="BioGRID" id="4260255">
    <property type="interactions" value="328"/>
</dbReference>
<dbReference type="BioGRID" id="849240">
    <property type="interactions" value="1"/>
</dbReference>
<dbReference type="DIP" id="DIP-10153N"/>
<dbReference type="FunCoup" id="P00946">
    <property type="interactions" value="746"/>
</dbReference>
<dbReference type="IntAct" id="P00946">
    <property type="interactions" value="19"/>
</dbReference>
<dbReference type="STRING" id="511145.b1613"/>
<dbReference type="BindingDB" id="P00946"/>
<dbReference type="ChEMBL" id="CHEMBL3309019"/>
<dbReference type="iPTMnet" id="P00946"/>
<dbReference type="jPOST" id="P00946"/>
<dbReference type="PaxDb" id="511145-b1613"/>
<dbReference type="EnsemblBacteria" id="AAC74685">
    <property type="protein sequence ID" value="AAC74685"/>
    <property type="gene ID" value="b1613"/>
</dbReference>
<dbReference type="GeneID" id="75204457"/>
<dbReference type="GeneID" id="944840"/>
<dbReference type="KEGG" id="ecj:JW1605"/>
<dbReference type="KEGG" id="eco:b1613"/>
<dbReference type="KEGG" id="ecoc:C3026_09280"/>
<dbReference type="PATRIC" id="fig|1411691.4.peg.649"/>
<dbReference type="EchoBASE" id="EB0561"/>
<dbReference type="eggNOG" id="COG1482">
    <property type="taxonomic scope" value="Bacteria"/>
</dbReference>
<dbReference type="HOGENOM" id="CLU_026967_1_0_6"/>
<dbReference type="InParanoid" id="P00946"/>
<dbReference type="OMA" id="DIGLFCG"/>
<dbReference type="OrthoDB" id="9792649at2"/>
<dbReference type="PhylomeDB" id="P00946"/>
<dbReference type="BioCyc" id="EcoCyc:MANNPISOM-MONOMER"/>
<dbReference type="BioCyc" id="MetaCyc:MANNPISOM-MONOMER"/>
<dbReference type="BRENDA" id="5.3.1.8">
    <property type="organism ID" value="2026"/>
</dbReference>
<dbReference type="PRO" id="PR:P00946"/>
<dbReference type="Proteomes" id="UP000000625">
    <property type="component" value="Chromosome"/>
</dbReference>
<dbReference type="GO" id="GO:0005829">
    <property type="term" value="C:cytosol"/>
    <property type="evidence" value="ECO:0000314"/>
    <property type="project" value="EcoCyc"/>
</dbReference>
<dbReference type="GO" id="GO:0004476">
    <property type="term" value="F:mannose-6-phosphate isomerase activity"/>
    <property type="evidence" value="ECO:0000314"/>
    <property type="project" value="EcoCyc"/>
</dbReference>
<dbReference type="GO" id="GO:0008270">
    <property type="term" value="F:zinc ion binding"/>
    <property type="evidence" value="ECO:0007669"/>
    <property type="project" value="InterPro"/>
</dbReference>
<dbReference type="GO" id="GO:0009242">
    <property type="term" value="P:colanic acid biosynthetic process"/>
    <property type="evidence" value="ECO:0000315"/>
    <property type="project" value="EcoCyc"/>
</dbReference>
<dbReference type="GO" id="GO:0009298">
    <property type="term" value="P:GDP-mannose biosynthetic process"/>
    <property type="evidence" value="ECO:0000315"/>
    <property type="project" value="EcoCyc"/>
</dbReference>
<dbReference type="GO" id="GO:0019309">
    <property type="term" value="P:mannose catabolic process"/>
    <property type="evidence" value="ECO:0000315"/>
    <property type="project" value="EcoCyc"/>
</dbReference>
<dbReference type="CDD" id="cd07011">
    <property type="entry name" value="cupin_PMI_type_I_N"/>
    <property type="match status" value="1"/>
</dbReference>
<dbReference type="FunFam" id="2.60.120.10:FF:000076">
    <property type="entry name" value="Mannose-6-phosphate isomerase"/>
    <property type="match status" value="1"/>
</dbReference>
<dbReference type="FunFam" id="2.60.120.10:FF:000030">
    <property type="entry name" value="Mannose-6-phosphate isomerase ManA"/>
    <property type="match status" value="1"/>
</dbReference>
<dbReference type="Gene3D" id="2.60.120.10">
    <property type="entry name" value="Jelly Rolls"/>
    <property type="match status" value="2"/>
</dbReference>
<dbReference type="Gene3D" id="1.10.441.10">
    <property type="entry name" value="Phosphomannose Isomerase, domain 2"/>
    <property type="match status" value="1"/>
</dbReference>
<dbReference type="InterPro" id="IPR001250">
    <property type="entry name" value="Man6P_Isoase-1"/>
</dbReference>
<dbReference type="InterPro" id="IPR016305">
    <property type="entry name" value="Mannose-6-P_Isomerase"/>
</dbReference>
<dbReference type="InterPro" id="IPR049071">
    <property type="entry name" value="MPI_cupin_dom"/>
</dbReference>
<dbReference type="InterPro" id="IPR018050">
    <property type="entry name" value="Pmannose_isomerase-type1_CS"/>
</dbReference>
<dbReference type="InterPro" id="IPR046457">
    <property type="entry name" value="PMI_typeI_cat"/>
</dbReference>
<dbReference type="InterPro" id="IPR046458">
    <property type="entry name" value="PMI_typeI_hel"/>
</dbReference>
<dbReference type="InterPro" id="IPR014710">
    <property type="entry name" value="RmlC-like_jellyroll"/>
</dbReference>
<dbReference type="InterPro" id="IPR011051">
    <property type="entry name" value="RmlC_Cupin_sf"/>
</dbReference>
<dbReference type="NCBIfam" id="TIGR00218">
    <property type="entry name" value="manA"/>
    <property type="match status" value="1"/>
</dbReference>
<dbReference type="NCBIfam" id="NF011710">
    <property type="entry name" value="PRK15131.1"/>
    <property type="match status" value="1"/>
</dbReference>
<dbReference type="PANTHER" id="PTHR10309">
    <property type="entry name" value="MANNOSE-6-PHOSPHATE ISOMERASE"/>
    <property type="match status" value="1"/>
</dbReference>
<dbReference type="PANTHER" id="PTHR10309:SF0">
    <property type="entry name" value="MANNOSE-6-PHOSPHATE ISOMERASE"/>
    <property type="match status" value="1"/>
</dbReference>
<dbReference type="Pfam" id="PF21621">
    <property type="entry name" value="MPI_cupin_dom"/>
    <property type="match status" value="1"/>
</dbReference>
<dbReference type="Pfam" id="PF20511">
    <property type="entry name" value="PMI_typeI_cat"/>
    <property type="match status" value="1"/>
</dbReference>
<dbReference type="Pfam" id="PF20512">
    <property type="entry name" value="PMI_typeI_hel"/>
    <property type="match status" value="1"/>
</dbReference>
<dbReference type="PIRSF" id="PIRSF001480">
    <property type="entry name" value="Mannose-6-phosphate_isomerase"/>
    <property type="match status" value="1"/>
</dbReference>
<dbReference type="PRINTS" id="PR00714">
    <property type="entry name" value="MAN6PISMRASE"/>
</dbReference>
<dbReference type="SUPFAM" id="SSF51182">
    <property type="entry name" value="RmlC-like cupins"/>
    <property type="match status" value="1"/>
</dbReference>
<dbReference type="PROSITE" id="PS00965">
    <property type="entry name" value="PMI_I_1"/>
    <property type="match status" value="1"/>
</dbReference>
<dbReference type="PROSITE" id="PS00966">
    <property type="entry name" value="PMI_I_2"/>
    <property type="match status" value="1"/>
</dbReference>
<reference key="1">
    <citation type="journal article" date="1984" name="Gene">
        <title>Nucleotide sequence and transcriptional start point of the phosphomannose isomerase gene (manA) of Escherichia coli.</title>
        <authorList>
            <person name="Miles J.S."/>
            <person name="Guest J.R."/>
        </authorList>
    </citation>
    <scope>NUCLEOTIDE SEQUENCE [GENOMIC DNA]</scope>
    <source>
        <strain>K12</strain>
    </source>
</reference>
<reference key="2">
    <citation type="journal article" date="1996" name="DNA Res.">
        <title>A 570-kb DNA sequence of the Escherichia coli K-12 genome corresponding to the 28.0-40.1 min region on the linkage map.</title>
        <authorList>
            <person name="Aiba H."/>
            <person name="Baba T."/>
            <person name="Fujita K."/>
            <person name="Hayashi K."/>
            <person name="Inada T."/>
            <person name="Isono K."/>
            <person name="Itoh T."/>
            <person name="Kasai H."/>
            <person name="Kashimoto K."/>
            <person name="Kimura S."/>
            <person name="Kitakawa M."/>
            <person name="Kitagawa M."/>
            <person name="Makino K."/>
            <person name="Miki T."/>
            <person name="Mizobuchi K."/>
            <person name="Mori H."/>
            <person name="Mori T."/>
            <person name="Motomura K."/>
            <person name="Nakade S."/>
            <person name="Nakamura Y."/>
            <person name="Nashimoto H."/>
            <person name="Nishio Y."/>
            <person name="Oshima T."/>
            <person name="Saito N."/>
            <person name="Sampei G."/>
            <person name="Seki Y."/>
            <person name="Sivasundaram S."/>
            <person name="Tagami H."/>
            <person name="Takeda J."/>
            <person name="Takemoto K."/>
            <person name="Takeuchi Y."/>
            <person name="Wada C."/>
            <person name="Yamamoto Y."/>
            <person name="Horiuchi T."/>
        </authorList>
    </citation>
    <scope>NUCLEOTIDE SEQUENCE [LARGE SCALE GENOMIC DNA]</scope>
    <source>
        <strain>K12 / W3110 / ATCC 27325 / DSM 5911</strain>
    </source>
</reference>
<reference key="3">
    <citation type="journal article" date="1997" name="Science">
        <title>The complete genome sequence of Escherichia coli K-12.</title>
        <authorList>
            <person name="Blattner F.R."/>
            <person name="Plunkett G. III"/>
            <person name="Bloch C.A."/>
            <person name="Perna N.T."/>
            <person name="Burland V."/>
            <person name="Riley M."/>
            <person name="Collado-Vides J."/>
            <person name="Glasner J.D."/>
            <person name="Rode C.K."/>
            <person name="Mayhew G.F."/>
            <person name="Gregor J."/>
            <person name="Davis N.W."/>
            <person name="Kirkpatrick H.A."/>
            <person name="Goeden M.A."/>
            <person name="Rose D.J."/>
            <person name="Mau B."/>
            <person name="Shao Y."/>
        </authorList>
    </citation>
    <scope>NUCLEOTIDE SEQUENCE [LARGE SCALE GENOMIC DNA]</scope>
    <source>
        <strain>K12 / MG1655 / ATCC 47076</strain>
    </source>
</reference>
<reference key="4">
    <citation type="journal article" date="2006" name="Mol. Syst. Biol.">
        <title>Highly accurate genome sequences of Escherichia coli K-12 strains MG1655 and W3110.</title>
        <authorList>
            <person name="Hayashi K."/>
            <person name="Morooka N."/>
            <person name="Yamamoto Y."/>
            <person name="Fujita K."/>
            <person name="Isono K."/>
            <person name="Choi S."/>
            <person name="Ohtsubo E."/>
            <person name="Baba T."/>
            <person name="Wanner B.L."/>
            <person name="Mori H."/>
            <person name="Horiuchi T."/>
        </authorList>
    </citation>
    <scope>NUCLEOTIDE SEQUENCE [LARGE SCALE GENOMIC DNA]</scope>
    <source>
        <strain>K12 / W3110 / ATCC 27325 / DSM 5911</strain>
    </source>
</reference>
<reference key="5">
    <citation type="submission" date="1995-08" db="EMBL/GenBank/DDBJ databases">
        <authorList>
            <person name="Robison K."/>
            <person name="O'Keeffe T."/>
            <person name="Church G.M."/>
        </authorList>
    </citation>
    <scope>NUCLEOTIDE SEQUENCE [GENOMIC DNA] OF 378-391</scope>
    <source>
        <strain>K12 / EMG2</strain>
    </source>
</reference>
<reference key="6">
    <citation type="journal article" date="2009" name="Mol. Cell. Proteomics">
        <title>Lysine acetylation is a highly abundant and evolutionarily conserved modification in Escherichia coli.</title>
        <authorList>
            <person name="Zhang J."/>
            <person name="Sprung R."/>
            <person name="Pei J."/>
            <person name="Tan X."/>
            <person name="Kim S."/>
            <person name="Zhu H."/>
            <person name="Liu C.F."/>
            <person name="Grishin N.V."/>
            <person name="Zhao Y."/>
        </authorList>
    </citation>
    <scope>ACETYLATION [LARGE SCALE ANALYSIS] AT LYS-280</scope>
    <scope>IDENTIFICATION BY MASS SPECTROMETRY</scope>
    <source>
        <strain>K12 / JW1106</strain>
        <strain>K12 / MG1655 / ATCC 47076</strain>
    </source>
</reference>
<comment type="function">
    <text>Involved in the conversion of glucose to GDP-L-fucose, which can be converted to L-fucose, a capsular polysaccharide.</text>
</comment>
<comment type="catalytic activity">
    <reaction>
        <text>D-mannose 6-phosphate = D-fructose 6-phosphate</text>
        <dbReference type="Rhea" id="RHEA:12356"/>
        <dbReference type="ChEBI" id="CHEBI:58735"/>
        <dbReference type="ChEBI" id="CHEBI:61527"/>
        <dbReference type="EC" id="5.3.1.8"/>
    </reaction>
</comment>
<comment type="cofactor">
    <cofactor evidence="1">
        <name>Zn(2+)</name>
        <dbReference type="ChEBI" id="CHEBI:29105"/>
    </cofactor>
    <text evidence="1">Binds 1 zinc ion per subunit.</text>
</comment>
<comment type="interaction">
    <interactant intactId="EBI-554045">
        <id>P00946</id>
    </interactant>
    <interactant intactId="EBI-554060">
        <id>P18196</id>
        <label>minC</label>
    </interactant>
    <organismsDiffer>false</organismsDiffer>
    <experiments>5</experiments>
</comment>
<comment type="subcellular location">
    <subcellularLocation>
        <location evidence="3">Cytoplasm</location>
    </subcellularLocation>
</comment>
<comment type="similarity">
    <text evidence="3">Belongs to the mannose-6-phosphate isomerase type 1 family.</text>
</comment>
<evidence type="ECO:0000250" key="1"/>
<evidence type="ECO:0000269" key="2">
    <source>
    </source>
</evidence>
<evidence type="ECO:0000305" key="3"/>
<keyword id="KW-0007">Acetylation</keyword>
<keyword id="KW-0963">Cytoplasm</keyword>
<keyword id="KW-0413">Isomerase</keyword>
<keyword id="KW-0479">Metal-binding</keyword>
<keyword id="KW-1185">Reference proteome</keyword>
<keyword id="KW-0862">Zinc</keyword>
<organism>
    <name type="scientific">Escherichia coli (strain K12)</name>
    <dbReference type="NCBI Taxonomy" id="83333"/>
    <lineage>
        <taxon>Bacteria</taxon>
        <taxon>Pseudomonadati</taxon>
        <taxon>Pseudomonadota</taxon>
        <taxon>Gammaproteobacteria</taxon>
        <taxon>Enterobacterales</taxon>
        <taxon>Enterobacteriaceae</taxon>
        <taxon>Escherichia</taxon>
    </lineage>
</organism>